<sequence length="174" mass="18895">MKDLTMLLDELKDMSFFNKGDICLIGCSTSEVIGEKIGTVGSMEVAETIFNALDVVSKETGVTFAFQGCEHINRAITIEKSQYNPLTMEEVSVVPDVHAGGSLATYAFQHMKDPIVVEHITVPCGIDIGQTLIGMHIKHVCVPVRTSVKQVGQAIVTIATSRPKKIGGERAKYK</sequence>
<reference key="1">
    <citation type="journal article" date="2008" name="Antimicrob. Agents Chemother.">
        <title>Mutated response regulator graR is responsible for phenotypic conversion of Staphylococcus aureus from heterogeneous vancomycin-intermediate resistance to vancomycin-intermediate resistance.</title>
        <authorList>
            <person name="Neoh H.-M."/>
            <person name="Cui L."/>
            <person name="Yuzawa H."/>
            <person name="Takeuchi F."/>
            <person name="Matsuo M."/>
            <person name="Hiramatsu K."/>
        </authorList>
    </citation>
    <scope>NUCLEOTIDE SEQUENCE [LARGE SCALE GENOMIC DNA]</scope>
    <source>
        <strain>Mu3 / ATCC 700698</strain>
    </source>
</reference>
<feature type="chain" id="PRO_1000046978" description="UPF0340 protein SAHV_2098">
    <location>
        <begin position="1"/>
        <end position="174"/>
    </location>
</feature>
<accession>A7X4V8</accession>
<protein>
    <recommendedName>
        <fullName evidence="1">UPF0340 protein SAHV_2098</fullName>
    </recommendedName>
</protein>
<gene>
    <name type="ordered locus">SAHV_2098</name>
</gene>
<name>Y2098_STAA1</name>
<organism>
    <name type="scientific">Staphylococcus aureus (strain Mu3 / ATCC 700698)</name>
    <dbReference type="NCBI Taxonomy" id="418127"/>
    <lineage>
        <taxon>Bacteria</taxon>
        <taxon>Bacillati</taxon>
        <taxon>Bacillota</taxon>
        <taxon>Bacilli</taxon>
        <taxon>Bacillales</taxon>
        <taxon>Staphylococcaceae</taxon>
        <taxon>Staphylococcus</taxon>
    </lineage>
</organism>
<dbReference type="EMBL" id="AP009324">
    <property type="protein sequence ID" value="BAF78981.1"/>
    <property type="molecule type" value="Genomic_DNA"/>
</dbReference>
<dbReference type="RefSeq" id="WP_000654184.1">
    <property type="nucleotide sequence ID" value="NC_009782.1"/>
</dbReference>
<dbReference type="SMR" id="A7X4V8"/>
<dbReference type="KEGG" id="saw:SAHV_2098"/>
<dbReference type="HOGENOM" id="CLU_106658_0_0_9"/>
<dbReference type="Gene3D" id="3.40.50.10360">
    <property type="entry name" value="Hypothetical protein TT1679"/>
    <property type="match status" value="1"/>
</dbReference>
<dbReference type="HAMAP" id="MF_00800">
    <property type="entry name" value="UPF0340"/>
    <property type="match status" value="1"/>
</dbReference>
<dbReference type="InterPro" id="IPR028345">
    <property type="entry name" value="Antibiotic_NAT-like"/>
</dbReference>
<dbReference type="InterPro" id="IPR006340">
    <property type="entry name" value="DUF436"/>
</dbReference>
<dbReference type="NCBIfam" id="TIGR01440">
    <property type="entry name" value="TIGR01440 family protein"/>
    <property type="match status" value="1"/>
</dbReference>
<dbReference type="Pfam" id="PF04260">
    <property type="entry name" value="DUF436"/>
    <property type="match status" value="1"/>
</dbReference>
<dbReference type="PIRSF" id="PIRSF007510">
    <property type="entry name" value="UCP007510"/>
    <property type="match status" value="1"/>
</dbReference>
<dbReference type="SUPFAM" id="SSF110710">
    <property type="entry name" value="TTHA0583/YokD-like"/>
    <property type="match status" value="1"/>
</dbReference>
<comment type="similarity">
    <text evidence="1">Belongs to the UPF0340 family.</text>
</comment>
<proteinExistence type="inferred from homology"/>
<evidence type="ECO:0000255" key="1">
    <source>
        <dbReference type="HAMAP-Rule" id="MF_00800"/>
    </source>
</evidence>